<organism>
    <name type="scientific">Aspergillus sclerotiorum</name>
    <dbReference type="NCBI Taxonomy" id="138282"/>
    <lineage>
        <taxon>Eukaryota</taxon>
        <taxon>Fungi</taxon>
        <taxon>Dikarya</taxon>
        <taxon>Ascomycota</taxon>
        <taxon>Pezizomycotina</taxon>
        <taxon>Eurotiomycetes</taxon>
        <taxon>Eurotiomycetidae</taxon>
        <taxon>Eurotiales</taxon>
        <taxon>Aspergillaceae</taxon>
        <taxon>Aspergillus</taxon>
        <taxon>Aspergillus subgen. Circumdati</taxon>
    </lineage>
</organism>
<dbReference type="EC" id="1.-.-.-" evidence="8"/>
<dbReference type="EC" id="2.3.1.-" evidence="8"/>
<dbReference type="GO" id="GO:0004315">
    <property type="term" value="F:3-oxoacyl-[acyl-carrier-protein] synthase activity"/>
    <property type="evidence" value="ECO:0007669"/>
    <property type="project" value="InterPro"/>
</dbReference>
<dbReference type="GO" id="GO:0004312">
    <property type="term" value="F:fatty acid synthase activity"/>
    <property type="evidence" value="ECO:0007669"/>
    <property type="project" value="TreeGrafter"/>
</dbReference>
<dbReference type="GO" id="GO:0008168">
    <property type="term" value="F:methyltransferase activity"/>
    <property type="evidence" value="ECO:0007669"/>
    <property type="project" value="UniProtKB-KW"/>
</dbReference>
<dbReference type="GO" id="GO:0016491">
    <property type="term" value="F:oxidoreductase activity"/>
    <property type="evidence" value="ECO:0007669"/>
    <property type="project" value="UniProtKB-KW"/>
</dbReference>
<dbReference type="GO" id="GO:0031177">
    <property type="term" value="F:phosphopantetheine binding"/>
    <property type="evidence" value="ECO:0007669"/>
    <property type="project" value="InterPro"/>
</dbReference>
<dbReference type="GO" id="GO:0006633">
    <property type="term" value="P:fatty acid biosynthetic process"/>
    <property type="evidence" value="ECO:0007669"/>
    <property type="project" value="InterPro"/>
</dbReference>
<dbReference type="GO" id="GO:0032259">
    <property type="term" value="P:methylation"/>
    <property type="evidence" value="ECO:0007669"/>
    <property type="project" value="UniProtKB-KW"/>
</dbReference>
<dbReference type="GO" id="GO:0044550">
    <property type="term" value="P:secondary metabolite biosynthetic process"/>
    <property type="evidence" value="ECO:0007669"/>
    <property type="project" value="TreeGrafter"/>
</dbReference>
<dbReference type="CDD" id="cd02440">
    <property type="entry name" value="AdoMet_MTases"/>
    <property type="match status" value="1"/>
</dbReference>
<dbReference type="CDD" id="cd00833">
    <property type="entry name" value="PKS"/>
    <property type="match status" value="1"/>
</dbReference>
<dbReference type="Gene3D" id="3.40.47.10">
    <property type="match status" value="1"/>
</dbReference>
<dbReference type="Gene3D" id="3.40.366.10">
    <property type="entry name" value="Malonyl-Coenzyme A Acyl Carrier Protein, domain 2"/>
    <property type="match status" value="1"/>
</dbReference>
<dbReference type="Gene3D" id="3.90.180.10">
    <property type="entry name" value="Medium-chain alcohol dehydrogenases, catalytic domain"/>
    <property type="match status" value="1"/>
</dbReference>
<dbReference type="Gene3D" id="3.40.50.720">
    <property type="entry name" value="NAD(P)-binding Rossmann-like Domain"/>
    <property type="match status" value="1"/>
</dbReference>
<dbReference type="Gene3D" id="3.10.129.110">
    <property type="entry name" value="Polyketide synthase dehydratase"/>
    <property type="match status" value="1"/>
</dbReference>
<dbReference type="Gene3D" id="3.40.50.150">
    <property type="entry name" value="Vaccinia Virus protein VP39"/>
    <property type="match status" value="1"/>
</dbReference>
<dbReference type="InterPro" id="IPR001227">
    <property type="entry name" value="Ac_transferase_dom_sf"/>
</dbReference>
<dbReference type="InterPro" id="IPR036736">
    <property type="entry name" value="ACP-like_sf"/>
</dbReference>
<dbReference type="InterPro" id="IPR014043">
    <property type="entry name" value="Acyl_transferase_dom"/>
</dbReference>
<dbReference type="InterPro" id="IPR016035">
    <property type="entry name" value="Acyl_Trfase/lysoPLipase"/>
</dbReference>
<dbReference type="InterPro" id="IPR011032">
    <property type="entry name" value="GroES-like_sf"/>
</dbReference>
<dbReference type="InterPro" id="IPR018201">
    <property type="entry name" value="Ketoacyl_synth_AS"/>
</dbReference>
<dbReference type="InterPro" id="IPR014031">
    <property type="entry name" value="Ketoacyl_synth_C"/>
</dbReference>
<dbReference type="InterPro" id="IPR014030">
    <property type="entry name" value="Ketoacyl_synth_N"/>
</dbReference>
<dbReference type="InterPro" id="IPR016036">
    <property type="entry name" value="Malonyl_transacylase_ACP-bd"/>
</dbReference>
<dbReference type="InterPro" id="IPR013217">
    <property type="entry name" value="Methyltransf_12"/>
</dbReference>
<dbReference type="InterPro" id="IPR036291">
    <property type="entry name" value="NAD(P)-bd_dom_sf"/>
</dbReference>
<dbReference type="InterPro" id="IPR032821">
    <property type="entry name" value="PKS_assoc"/>
</dbReference>
<dbReference type="InterPro" id="IPR020841">
    <property type="entry name" value="PKS_Beta-ketoAc_synthase_dom"/>
</dbReference>
<dbReference type="InterPro" id="IPR042104">
    <property type="entry name" value="PKS_dehydratase_sf"/>
</dbReference>
<dbReference type="InterPro" id="IPR020807">
    <property type="entry name" value="PKS_DH"/>
</dbReference>
<dbReference type="InterPro" id="IPR049551">
    <property type="entry name" value="PKS_DH_C"/>
</dbReference>
<dbReference type="InterPro" id="IPR049552">
    <property type="entry name" value="PKS_DH_N"/>
</dbReference>
<dbReference type="InterPro" id="IPR020843">
    <property type="entry name" value="PKS_ER"/>
</dbReference>
<dbReference type="InterPro" id="IPR013968">
    <property type="entry name" value="PKS_KR"/>
</dbReference>
<dbReference type="InterPro" id="IPR049900">
    <property type="entry name" value="PKS_mFAS_DH"/>
</dbReference>
<dbReference type="InterPro" id="IPR050091">
    <property type="entry name" value="PKS_NRPS_Biosynth_Enz"/>
</dbReference>
<dbReference type="InterPro" id="IPR020806">
    <property type="entry name" value="PKS_PP-bd"/>
</dbReference>
<dbReference type="InterPro" id="IPR009081">
    <property type="entry name" value="PP-bd_ACP"/>
</dbReference>
<dbReference type="InterPro" id="IPR029063">
    <property type="entry name" value="SAM-dependent_MTases_sf"/>
</dbReference>
<dbReference type="InterPro" id="IPR016039">
    <property type="entry name" value="Thiolase-like"/>
</dbReference>
<dbReference type="PANTHER" id="PTHR43775">
    <property type="entry name" value="FATTY ACID SYNTHASE"/>
    <property type="match status" value="1"/>
</dbReference>
<dbReference type="PANTHER" id="PTHR43775:SF50">
    <property type="entry name" value="HIGHLY REDUCING POLYKETIDE SYNTHASE SRDA"/>
    <property type="match status" value="1"/>
</dbReference>
<dbReference type="Pfam" id="PF00698">
    <property type="entry name" value="Acyl_transf_1"/>
    <property type="match status" value="1"/>
</dbReference>
<dbReference type="Pfam" id="PF16197">
    <property type="entry name" value="KAsynt_C_assoc"/>
    <property type="match status" value="1"/>
</dbReference>
<dbReference type="Pfam" id="PF00109">
    <property type="entry name" value="ketoacyl-synt"/>
    <property type="match status" value="1"/>
</dbReference>
<dbReference type="Pfam" id="PF02801">
    <property type="entry name" value="Ketoacyl-synt_C"/>
    <property type="match status" value="1"/>
</dbReference>
<dbReference type="Pfam" id="PF08659">
    <property type="entry name" value="KR"/>
    <property type="match status" value="1"/>
</dbReference>
<dbReference type="Pfam" id="PF08242">
    <property type="entry name" value="Methyltransf_12"/>
    <property type="match status" value="1"/>
</dbReference>
<dbReference type="Pfam" id="PF21089">
    <property type="entry name" value="PKS_DH_N"/>
    <property type="match status" value="1"/>
</dbReference>
<dbReference type="Pfam" id="PF14765">
    <property type="entry name" value="PS-DH"/>
    <property type="match status" value="1"/>
</dbReference>
<dbReference type="SMART" id="SM00827">
    <property type="entry name" value="PKS_AT"/>
    <property type="match status" value="1"/>
</dbReference>
<dbReference type="SMART" id="SM00826">
    <property type="entry name" value="PKS_DH"/>
    <property type="match status" value="1"/>
</dbReference>
<dbReference type="SMART" id="SM00829">
    <property type="entry name" value="PKS_ER"/>
    <property type="match status" value="1"/>
</dbReference>
<dbReference type="SMART" id="SM00822">
    <property type="entry name" value="PKS_KR"/>
    <property type="match status" value="1"/>
</dbReference>
<dbReference type="SMART" id="SM00825">
    <property type="entry name" value="PKS_KS"/>
    <property type="match status" value="1"/>
</dbReference>
<dbReference type="SMART" id="SM00823">
    <property type="entry name" value="PKS_PP"/>
    <property type="match status" value="1"/>
</dbReference>
<dbReference type="SUPFAM" id="SSF47336">
    <property type="entry name" value="ACP-like"/>
    <property type="match status" value="1"/>
</dbReference>
<dbReference type="SUPFAM" id="SSF52151">
    <property type="entry name" value="FabD/lysophospholipase-like"/>
    <property type="match status" value="1"/>
</dbReference>
<dbReference type="SUPFAM" id="SSF50129">
    <property type="entry name" value="GroES-like"/>
    <property type="match status" value="1"/>
</dbReference>
<dbReference type="SUPFAM" id="SSF51735">
    <property type="entry name" value="NAD(P)-binding Rossmann-fold domains"/>
    <property type="match status" value="2"/>
</dbReference>
<dbReference type="SUPFAM" id="SSF55048">
    <property type="entry name" value="Probable ACP-binding domain of malonyl-CoA ACP transacylase"/>
    <property type="match status" value="1"/>
</dbReference>
<dbReference type="SUPFAM" id="SSF53335">
    <property type="entry name" value="S-adenosyl-L-methionine-dependent methyltransferases"/>
    <property type="match status" value="1"/>
</dbReference>
<dbReference type="SUPFAM" id="SSF53901">
    <property type="entry name" value="Thiolase-like"/>
    <property type="match status" value="1"/>
</dbReference>
<dbReference type="PROSITE" id="PS50075">
    <property type="entry name" value="CARRIER"/>
    <property type="match status" value="1"/>
</dbReference>
<dbReference type="PROSITE" id="PS00606">
    <property type="entry name" value="KS3_1"/>
    <property type="match status" value="1"/>
</dbReference>
<dbReference type="PROSITE" id="PS52004">
    <property type="entry name" value="KS3_2"/>
    <property type="match status" value="1"/>
</dbReference>
<dbReference type="PROSITE" id="PS52019">
    <property type="entry name" value="PKS_MFAS_DH"/>
    <property type="match status" value="1"/>
</dbReference>
<protein>
    <recommendedName>
        <fullName evidence="7">Highly reducing polyketide synthase resH</fullName>
        <shortName evidence="7">HR-PKS rstn3</shortName>
        <ecNumber evidence="8">1.-.-.-</ecNumber>
        <ecNumber evidence="8">2.3.1.-</ecNumber>
    </recommendedName>
    <alternativeName>
        <fullName evidence="7">Restricticin biosynthesis cluster protein H</fullName>
    </alternativeName>
</protein>
<feature type="chain" id="PRO_0000461546" description="Highly reducing polyketide synthase resH">
    <location>
        <begin position="1"/>
        <end position="2568"/>
    </location>
</feature>
<feature type="domain" description="Ketosynthase family 3 (KS3)" evidence="4">
    <location>
        <begin position="9"/>
        <end position="437"/>
    </location>
</feature>
<feature type="domain" description="Malonyl-CoA:ACP transacylase (MAT)" evidence="2">
    <location>
        <begin position="549"/>
        <end position="877"/>
    </location>
</feature>
<feature type="domain" description="PKS/mFAS DH" evidence="5">
    <location>
        <begin position="942"/>
        <end position="1244"/>
    </location>
</feature>
<feature type="domain" description="Enoyl reductase (ER)" evidence="2">
    <location>
        <begin position="1853"/>
        <end position="2154"/>
    </location>
</feature>
<feature type="domain" description="Ketoreductase (KR)" evidence="2">
    <location>
        <begin position="2177"/>
        <end position="2357"/>
    </location>
</feature>
<feature type="domain" description="Carrier" evidence="3">
    <location>
        <begin position="2485"/>
        <end position="2563"/>
    </location>
</feature>
<feature type="region of interest" description="N-terminal hotdog fold" evidence="5">
    <location>
        <begin position="942"/>
        <end position="1081"/>
    </location>
</feature>
<feature type="region of interest" description="C-terminal hotdog fold" evidence="5">
    <location>
        <begin position="1091"/>
        <end position="1244"/>
    </location>
</feature>
<feature type="region of interest" description="Methyltransferase (CMet) domain" evidence="2">
    <location>
        <begin position="1295"/>
        <end position="1595"/>
    </location>
</feature>
<feature type="active site" description="For beta-ketoacyl synthase activity" evidence="4">
    <location>
        <position position="184"/>
    </location>
</feature>
<feature type="active site" description="For beta-ketoacyl synthase activity" evidence="4">
    <location>
        <position position="319"/>
    </location>
</feature>
<feature type="active site" description="For beta-ketoacyl synthase activity" evidence="4">
    <location>
        <position position="359"/>
    </location>
</feature>
<feature type="active site" description="Proton acceptor; for dehydratase activity" evidence="5">
    <location>
        <position position="974"/>
    </location>
</feature>
<feature type="active site" description="Proton donor; for dehydratase activity" evidence="5">
    <location>
        <position position="1156"/>
    </location>
</feature>
<feature type="modified residue" description="O-(pantetheine 4'-phosphoryl)serine" evidence="3">
    <location>
        <position position="2522"/>
    </location>
</feature>
<evidence type="ECO:0000250" key="1">
    <source>
        <dbReference type="UniProtKB" id="A0A0L1JG62"/>
    </source>
</evidence>
<evidence type="ECO:0000255" key="2"/>
<evidence type="ECO:0000255" key="3">
    <source>
        <dbReference type="PROSITE-ProRule" id="PRU00258"/>
    </source>
</evidence>
<evidence type="ECO:0000255" key="4">
    <source>
        <dbReference type="PROSITE-ProRule" id="PRU01348"/>
    </source>
</evidence>
<evidence type="ECO:0000255" key="5">
    <source>
        <dbReference type="PROSITE-ProRule" id="PRU01363"/>
    </source>
</evidence>
<evidence type="ECO:0000269" key="6">
    <source>
    </source>
</evidence>
<evidence type="ECO:0000303" key="7">
    <source>
    </source>
</evidence>
<evidence type="ECO:0000305" key="8">
    <source>
    </source>
</evidence>
<keyword id="KW-0012">Acyltransferase</keyword>
<keyword id="KW-0489">Methyltransferase</keyword>
<keyword id="KW-0511">Multifunctional enzyme</keyword>
<keyword id="KW-0521">NADP</keyword>
<keyword id="KW-0560">Oxidoreductase</keyword>
<keyword id="KW-0596">Phosphopantetheine</keyword>
<keyword id="KW-0597">Phosphoprotein</keyword>
<keyword id="KW-0808">Transferase</keyword>
<reference key="1">
    <citation type="journal article" date="2024" name="J. Agric. Food Chem.">
        <title>Discovery of a hybrid molecule with phytotoxic activity by genome mining, heterologous expression, and OSMAC strategy.</title>
        <authorList>
            <person name="Lu Y."/>
            <person name="Li Y."/>
            <person name="Dou M."/>
            <person name="Liu D."/>
            <person name="Lin W."/>
            <person name="Fan A."/>
        </authorList>
    </citation>
    <scope>NUCLEOTIDE SEQUENCE [GENOMIC DNA]</scope>
    <scope>FUNCTION</scope>
    <scope>PATHWAY</scope>
</reference>
<proteinExistence type="inferred from homology"/>
<name>RESH_ASPSL</name>
<gene>
    <name evidence="7" type="primary">resH</name>
</gene>
<accession>P0DXV7</accession>
<comment type="function">
    <text evidence="1 6">Highly reducing polyketide synthase; part of the gene cluster that mediates the biosynthesis of the tetrahydropyranyl antifungal agent restricticin that acts as an inhibitor of CYP51 and blocks the ergosterol biosynthesis (PubMed:39105744). The highly reducing polyketide synthase resH, the short chain dehydrogenase resG, the cyclase resF, the FAD-dependent monooxygenase resA and the enoylreductase resD are required to generate the first stable intermediate desmethylrestrictinol. ResH with resD biosynthesize the first polyketide chain intermediate that is reduced by resG, followed by epoxidation by resA before 6-endo cyclization via epoxide opening by resF leads to desmethylrestrictinol. The methyltransferase resE then catalyzes the C4 O-methylation of desmethylrestrictinol to produce restrictinol, and the nonribosomal peptide synthetase resC catalyzes the C3 esterification of restrictinol with glycine that leads to restricticin (By similarity).</text>
</comment>
<comment type="cofactor">
    <cofactor evidence="3">
        <name>pantetheine 4'-phosphate</name>
        <dbReference type="ChEBI" id="CHEBI:47942"/>
    </cofactor>
</comment>
<comment type="pathway">
    <text evidence="6">Antifungal biosynthesis.</text>
</comment>
<comment type="domain">
    <text evidence="8">Multidomain protein; including a ketosynthase (KS) that catalyzes repeated decarboxylative condensation to elongate the polyketide backbone; a malonyl-CoA:ACP transacylase (MAT) that selects and transfers the extender unit malonyl-CoA; a dehydratase (DH) domain that reduces hydroxyl groups to enoyl groups; a methyltransferase (CMeT) domain responsible for the incorporation of methyl groups; an enoylreductase (ER) domain that reduces enoyl groups to alkyl group; a ketoreductase (KR) domain that catalyzes beta-ketoreduction steps; and an acyl-carrier protein (ACP) that serves as the tether of the growing and completed polyketide via its phosphopantetheinyl arm.</text>
</comment>
<sequence>MAPQNNGYPEPIAIVGMACRLPGEVTSPSKLWDLLVEERSAQSDVPSNRFNVDSWYHPDKTRPGSISTRGGYFLSEDDSYRQFDPFFFGINPKEAASMDPQQRKLLEVVYESFEAAGARLEDVSGSKTACYVGNFTWDIGQMQARDVNHGAPYHMTGGGLTILSNRVNYVFNLKGPSMTIDTACSSTMYALHLACRSLQAGDCSAAIVAGTNLIFGIEQQIGSVRLGVLSPTSACHTFDESADGYARAEAVGSLYLKTLSQAIADGDPIRAIVRGTSINANGKSPGISHPSAQDQEMVIRKAYASAGLDLDQTGYFECHGTGTPVGDPLEVSAIGNVFGNVRTAENPLLMGSVKTNLGHGEAASAISSLIKTILCLEKGEIPATIGIKRLNPDLNLRDGRLKIVQTRSPWPAAQHYLRASVNSFGYGGANAHAILDAVQSYLGDVYQSIPASLPAPEKSASKKYLLLPFSAHSEPTLERNIETISHSFKSGSFSLPDLAHTLGSRRSNHSVRAFGLVSGDADGPQLVDSLRPSKLTVGTAAGASPKLAFIFTGQGAQWAQMGYELVQEYAVVRQTLQDLGRTISKLPNAPDWDLLEALAQPKTKSRVNEAELSQPLTTAVQIAMVDLLRSWGVHPTAVAGHSSGEIAAAYTAGLISAAEAIIIAYQRGAATVKSTQQGAMLAVGQGPEEVLQVIQDIPGVGIACYNAPDSVTLSGTEKAIDEARGRFARAGVFNRKLITSGNAYHSELMTEAGTYYETFLKTCLLPNDPPSTGHASVTMFSSVTEEELSTIELDYWRKNLESPVRFDQATQKLLKQRPEVNVVVEIGPHSALAAPLKAIRTSVGYSPERLVYLSALKRNADSVESMLKLAGSLFLSGWPLDLSTVNADETVYQDETGAERIQYSHGSFIKDLPTYQWTYDEDFLWNESRLSTDIRFRSYPHHDLLGSRLPGTSNAAPAWRNLLSLDQVPWLRDHKVGEDIVFPAAGYVALAVEAVTQIRGSTVTTVDDAYTLRDVNITSAMVLKEGLSTELMFDLFAVTGQPATYQFSVTTVSQGTWTQHATGSVLIDSKNTNDQLLWPDDRNVGSRGGVNKDSYDRRWYAAMDKVGLIYGPGFKTLADIRASPEHLQATAEVSRTATDGLMGHQSEYMLHPTTIDACLQLSIIAAHHGKPESLNKVYLPVAIRKLTIRPQKDSGGVIPLAACGRGHHRGLRSVQTFIDLSSPSNRSLLQAEISFSSLETASSDTVTSKSPQPYTRLVWKPDFDRMSNAEANALFHGTQEDMSASRHFFSELEKVTRLAIRSSAERLPENLQTDHLPAHMHKFLAWLKTEGQALASSEGHDGLTGKDLMEEINSIARNVAHTVPEAAMVAQLNSRMPEIVSGTVGALDVMVEDDLMSKIYEDGFGQVGAYAKLSSVMELVAHKDPSLRILELGAGTGGATKPMLQALQGDTPLPKYAKYDFTDVSKAFLGVAQDKFEGYRNLDFGILDIEQDPAAQGFEEGSYDIVFASNVIHATRNVASSLSHCRRLLKPNGKLMIIETTKQRQVTGFMLGTLPGYWLGADDGRPSSPFLSKALWHQRLLDAGLSGADVVLDDYPEPADCTTLMVSRNVGDAVEHTSMNGTHGVNGVNGFHETNGQNGLNGANGVKSPLVTLIYRNTPQPFQQALEQKYAQLGISTRSMALLDVPTSLERDSRTVMLGELESPLMARMTPDEMHAIQRYTQLAATAIWVTNIDVLQGRDAEKSLVFGLAKSIMTEQPSFHLCSVDVDIYDGKTDYEHSSKLIVETEMAFHDDPNGDLDTELVEKDGLVYISRYVTDDAENANFERHLAIKPTMSSFSESDSSNYSLEFEKVGRLDSFYFKEHSLKALGEHEVLLDIEAAPLDELSIPTLKGQASSSCFGLVMAGTVRAVGPKASKLKKGDRVCCLHPHHFDTAVIVDERVCELLSAHERSEDLISQIHPVVVSLHIVETLLRLRTGDRVLIDCRQAYLAYAIAQVALLAGSTVQVTFNSEPGRGFLQNLGDNAHLVDRRAGFNDSLVGSSFDAIITDAKEGYQLFCESLTYGGRITVLANGAPGDMASAAVSFLNKGTTVGMFDPIDGFANVPLQHSSLVTKALDLLRHNTIRPLPSTQYDLSSFTDAVGHISQEDSVGLAVLTRTSNTAVPIHTVTQPLEFNSQASYLLIGCLGGLGRSLTTWMVSRGARHFVFLSRSGADKPEAAALVQELGELTRTRYYDLTVQVVRGDVSSKEDVSRAIACAKQPIKGVVQAAMVLKDTLFTEMTLGQFNQVLHPKMLGTIHLHELLQDHDLDFFVMTSSVLGAIGAAMQSNYSAANAFLDHMARYRQSQGQQATSIALGMILDVGHVEEHPEVEKALKRNGMYGISVDEYLLMMEFACRRRDLSASARKEGPFKYDPCASAHIVTGMDPTRVSRAGGKSLWLKDNRLRNLVAALGGGSEGEDALNAKQSAGTSTRELLDAARAEGGEAAVKSAILGLILARFSKLVLLPVAKIDPGKSLAHYGMDSMISAELKSWAWREFTVDLPFLGLLDQGLTFDGLADQVVSLAETRSS</sequence>